<accession>Q8GYB4</accession>
<accession>Q9FIV7</accession>
<protein>
    <recommendedName>
        <fullName>Cationic amino acid transporter 3, mitochondrial</fullName>
    </recommendedName>
</protein>
<dbReference type="EMBL" id="AB016877">
    <property type="protein sequence ID" value="BAB11637.1"/>
    <property type="status" value="ALT_SEQ"/>
    <property type="molecule type" value="Genomic_DNA"/>
</dbReference>
<dbReference type="EMBL" id="CP002688">
    <property type="protein sequence ID" value="AED94130.1"/>
    <property type="molecule type" value="Genomic_DNA"/>
</dbReference>
<dbReference type="EMBL" id="AK117747">
    <property type="protein sequence ID" value="BAC42395.1"/>
    <property type="molecule type" value="mRNA"/>
</dbReference>
<dbReference type="RefSeq" id="NP_198510.2">
    <property type="nucleotide sequence ID" value="NM_123052.5"/>
</dbReference>
<dbReference type="SMR" id="Q8GYB4"/>
<dbReference type="FunCoup" id="Q8GYB4">
    <property type="interactions" value="616"/>
</dbReference>
<dbReference type="STRING" id="3702.Q8GYB4"/>
<dbReference type="PaxDb" id="3702-AT5G36940.1"/>
<dbReference type="ProteomicsDB" id="240308"/>
<dbReference type="EnsemblPlants" id="AT5G36940.1">
    <property type="protein sequence ID" value="AT5G36940.1"/>
    <property type="gene ID" value="AT5G36940"/>
</dbReference>
<dbReference type="GeneID" id="833664"/>
<dbReference type="Gramene" id="AT5G36940.1">
    <property type="protein sequence ID" value="AT5G36940.1"/>
    <property type="gene ID" value="AT5G36940"/>
</dbReference>
<dbReference type="KEGG" id="ath:AT5G36940"/>
<dbReference type="Araport" id="AT5G36940"/>
<dbReference type="TAIR" id="AT5G36940">
    <property type="gene designation" value="CAT3"/>
</dbReference>
<dbReference type="eggNOG" id="KOG1286">
    <property type="taxonomic scope" value="Eukaryota"/>
</dbReference>
<dbReference type="HOGENOM" id="CLU_007946_15_7_1"/>
<dbReference type="InParanoid" id="Q8GYB4"/>
<dbReference type="OMA" id="WQLTMIS"/>
<dbReference type="PhylomeDB" id="Q8GYB4"/>
<dbReference type="PRO" id="PR:Q8GYB4"/>
<dbReference type="Proteomes" id="UP000006548">
    <property type="component" value="Chromosome 5"/>
</dbReference>
<dbReference type="ExpressionAtlas" id="Q8GYB4">
    <property type="expression patterns" value="baseline and differential"/>
</dbReference>
<dbReference type="GO" id="GO:0005783">
    <property type="term" value="C:endoplasmic reticulum"/>
    <property type="evidence" value="ECO:0000314"/>
    <property type="project" value="TAIR"/>
</dbReference>
<dbReference type="GO" id="GO:0031966">
    <property type="term" value="C:mitochondrial membrane"/>
    <property type="evidence" value="ECO:0007669"/>
    <property type="project" value="UniProtKB-SubCell"/>
</dbReference>
<dbReference type="GO" id="GO:0005635">
    <property type="term" value="C:nuclear envelope"/>
    <property type="evidence" value="ECO:0000314"/>
    <property type="project" value="TAIR"/>
</dbReference>
<dbReference type="GO" id="GO:0022857">
    <property type="term" value="F:transmembrane transporter activity"/>
    <property type="evidence" value="ECO:0007669"/>
    <property type="project" value="InterPro"/>
</dbReference>
<dbReference type="GO" id="GO:0006865">
    <property type="term" value="P:amino acid transport"/>
    <property type="evidence" value="ECO:0007669"/>
    <property type="project" value="UniProtKB-KW"/>
</dbReference>
<dbReference type="FunFam" id="1.20.1740.10:FF:000010">
    <property type="entry name" value="probable cationic amino acid transporter"/>
    <property type="match status" value="1"/>
</dbReference>
<dbReference type="Gene3D" id="1.20.1740.10">
    <property type="entry name" value="Amino acid/polyamine transporter I"/>
    <property type="match status" value="2"/>
</dbReference>
<dbReference type="InterPro" id="IPR002293">
    <property type="entry name" value="AA/rel_permease1"/>
</dbReference>
<dbReference type="InterPro" id="IPR029485">
    <property type="entry name" value="CAT_C"/>
</dbReference>
<dbReference type="PANTHER" id="PTHR43243:SF63">
    <property type="entry name" value="CATIONIC AMINO ACID TRANSPORTER 3, MITOCHONDRIAL"/>
    <property type="match status" value="1"/>
</dbReference>
<dbReference type="PANTHER" id="PTHR43243">
    <property type="entry name" value="INNER MEMBRANE TRANSPORTER YGJI-RELATED"/>
    <property type="match status" value="1"/>
</dbReference>
<dbReference type="Pfam" id="PF13520">
    <property type="entry name" value="AA_permease_2"/>
    <property type="match status" value="1"/>
</dbReference>
<dbReference type="Pfam" id="PF13906">
    <property type="entry name" value="AA_permease_C"/>
    <property type="match status" value="1"/>
</dbReference>
<dbReference type="PIRSF" id="PIRSF006060">
    <property type="entry name" value="AA_transporter"/>
    <property type="match status" value="1"/>
</dbReference>
<feature type="transit peptide" description="Mitochondrion" evidence="1">
    <location>
        <begin position="1"/>
        <end position="14"/>
    </location>
</feature>
<feature type="chain" id="PRO_0000415779" description="Cationic amino acid transporter 3, mitochondrial">
    <location>
        <begin position="15"/>
        <end position="609"/>
    </location>
</feature>
<feature type="transmembrane region" description="Helical" evidence="1">
    <location>
        <begin position="38"/>
        <end position="58"/>
    </location>
</feature>
<feature type="transmembrane region" description="Helical" evidence="1">
    <location>
        <begin position="66"/>
        <end position="86"/>
    </location>
</feature>
<feature type="transmembrane region" description="Helical" evidence="1">
    <location>
        <begin position="104"/>
        <end position="124"/>
    </location>
</feature>
<feature type="transmembrane region" description="Helical" evidence="1">
    <location>
        <begin position="161"/>
        <end position="181"/>
    </location>
</feature>
<feature type="transmembrane region" description="Helical" evidence="1">
    <location>
        <begin position="190"/>
        <end position="210"/>
    </location>
</feature>
<feature type="transmembrane region" description="Helical" evidence="1">
    <location>
        <begin position="226"/>
        <end position="246"/>
    </location>
</feature>
<feature type="transmembrane region" description="Helical" evidence="1">
    <location>
        <begin position="270"/>
        <end position="290"/>
    </location>
</feature>
<feature type="transmembrane region" description="Helical" evidence="1">
    <location>
        <begin position="314"/>
        <end position="334"/>
    </location>
</feature>
<feature type="transmembrane region" description="Helical" evidence="1">
    <location>
        <begin position="361"/>
        <end position="381"/>
    </location>
</feature>
<feature type="transmembrane region" description="Helical" evidence="1">
    <location>
        <begin position="388"/>
        <end position="408"/>
    </location>
</feature>
<feature type="transmembrane region" description="Helical" evidence="1">
    <location>
        <begin position="474"/>
        <end position="494"/>
    </location>
</feature>
<feature type="transmembrane region" description="Helical" evidence="1">
    <location>
        <begin position="499"/>
        <end position="519"/>
    </location>
</feature>
<feature type="transmembrane region" description="Helical" evidence="1">
    <location>
        <begin position="534"/>
        <end position="554"/>
    </location>
</feature>
<feature type="transmembrane region" description="Helical" evidence="1">
    <location>
        <begin position="558"/>
        <end position="578"/>
    </location>
</feature>
<name>CAAT3_ARATH</name>
<comment type="function">
    <text evidence="2">Permease involved in the transport of the cationic neutral or acidic amino acids.</text>
</comment>
<comment type="subcellular location">
    <subcellularLocation>
        <location evidence="3">Mitochondrion membrane</location>
        <topology evidence="3">Multi-pass membrane protein</topology>
    </subcellularLocation>
</comment>
<comment type="tissue specificity">
    <text evidence="2">Expressed in roots, stems, flowers, and leaves.</text>
</comment>
<comment type="similarity">
    <text evidence="3">Belongs to the amino acid-polyamine-organocation (APC) superfamily. Cationic amino acid transporter (CAT) (TC 2.A.3.3) family.</text>
</comment>
<comment type="sequence caution" evidence="3">
    <conflict type="erroneous gene model prediction">
        <sequence resource="EMBL-CDS" id="BAB11637"/>
    </conflict>
</comment>
<sequence>MGCLRSLVRRKQFDSSNGKAETHHHHQQLAKALTFPHLIAIGVGSTIGAGVYILVGTVAREHSGPALALSFLIAGISAALSAFCYAELSSRFPSAGSAYHYSYICIGEGVAWLIGWALILEYTIGGSTVARGISPNLAMIFGGEDCLPTILARHQIPGLDIVVDPCAAVLVFIVTGLCCLGVKESTFAQGIVTTANVFVMIFVIVAGSYLCFKTGWVGYELPTGYFPYGVDGMLTGSATVFFAYIGFDTVASMAEEVKNPRRDLPLGIGISLLLCCLLYMMVSVVIVGLVPYYAMDPDTPISSAFSSHGIQWAAYLINLGAVMALCSALMGSILPQPRILMAMARDGLLPSYFSYVNQRTQVPINGTITTGVCAAILAFFMDVSQLAGMVSVGTLVAFTMVAISLLIVRYVVPPDEVPLPSSLQENSSSHVGTSIRSKQPLLGKVDDSVVDKENAPGSWVLNKKNRRKFAGWSIMFTCIGNFLLSYAASSFLLPGLLRYSLCGVGGLFLLVGLIVLICIDQDDARHSFGHSGGFICPFVPLLPIVCILINMYLLVNLGAATWVRVSVWLFLGVVVYIFYGRRNSSLVNAVYVSTAHLQEIRRTSGHSLA</sequence>
<gene>
    <name type="primary">CAT3</name>
    <name type="ordered locus">At5g36940</name>
    <name type="ORF">MLF18.60</name>
</gene>
<reference key="1">
    <citation type="journal article" date="1998" name="DNA Res.">
        <title>Structural analysis of Arabidopsis thaliana chromosome 5. VIII. Sequence features of the regions of 1,081,958 bp covered by seventeen physically assigned P1 and TAC clones.</title>
        <authorList>
            <person name="Asamizu E."/>
            <person name="Sato S."/>
            <person name="Kaneko T."/>
            <person name="Nakamura Y."/>
            <person name="Kotani H."/>
            <person name="Miyajima N."/>
            <person name="Tabata S."/>
        </authorList>
    </citation>
    <scope>NUCLEOTIDE SEQUENCE [LARGE SCALE GENOMIC DNA]</scope>
    <source>
        <strain>cv. Columbia</strain>
    </source>
</reference>
<reference key="2">
    <citation type="journal article" date="2017" name="Plant J.">
        <title>Araport11: a complete reannotation of the Arabidopsis thaliana reference genome.</title>
        <authorList>
            <person name="Cheng C.Y."/>
            <person name="Krishnakumar V."/>
            <person name="Chan A.P."/>
            <person name="Thibaud-Nissen F."/>
            <person name="Schobel S."/>
            <person name="Town C.D."/>
        </authorList>
    </citation>
    <scope>GENOME REANNOTATION</scope>
    <source>
        <strain>cv. Columbia</strain>
    </source>
</reference>
<reference key="3">
    <citation type="journal article" date="2002" name="Science">
        <title>Functional annotation of a full-length Arabidopsis cDNA collection.</title>
        <authorList>
            <person name="Seki M."/>
            <person name="Narusaka M."/>
            <person name="Kamiya A."/>
            <person name="Ishida J."/>
            <person name="Satou M."/>
            <person name="Sakurai T."/>
            <person name="Nakajima M."/>
            <person name="Enju A."/>
            <person name="Akiyama K."/>
            <person name="Oono Y."/>
            <person name="Muramatsu M."/>
            <person name="Hayashizaki Y."/>
            <person name="Kawai J."/>
            <person name="Carninci P."/>
            <person name="Itoh M."/>
            <person name="Ishii Y."/>
            <person name="Arakawa T."/>
            <person name="Shibata K."/>
            <person name="Shinagawa A."/>
            <person name="Shinozaki K."/>
        </authorList>
    </citation>
    <scope>NUCLEOTIDE SEQUENCE [LARGE SCALE MRNA]</scope>
    <source>
        <strain>cv. Columbia</strain>
    </source>
</reference>
<reference key="4">
    <citation type="journal article" date="2004" name="Plant Physiol.">
        <title>Molecular and functional characterization of a family of amino acid transporters from Arabidopsis.</title>
        <authorList>
            <person name="Su Y.-H."/>
            <person name="Frommer W.B."/>
            <person name="Ludewig U."/>
        </authorList>
    </citation>
    <scope>FUNCTION</scope>
    <scope>TISSUE SPECIFICITY</scope>
    <scope>GENE FAMILY</scope>
    <scope>NOMENCLATURE</scope>
    <source>
        <strain>cv. Columbia</strain>
    </source>
</reference>
<keyword id="KW-0029">Amino-acid transport</keyword>
<keyword id="KW-0472">Membrane</keyword>
<keyword id="KW-0496">Mitochondrion</keyword>
<keyword id="KW-1185">Reference proteome</keyword>
<keyword id="KW-0809">Transit peptide</keyword>
<keyword id="KW-0812">Transmembrane</keyword>
<keyword id="KW-1133">Transmembrane helix</keyword>
<keyword id="KW-0813">Transport</keyword>
<organism>
    <name type="scientific">Arabidopsis thaliana</name>
    <name type="common">Mouse-ear cress</name>
    <dbReference type="NCBI Taxonomy" id="3702"/>
    <lineage>
        <taxon>Eukaryota</taxon>
        <taxon>Viridiplantae</taxon>
        <taxon>Streptophyta</taxon>
        <taxon>Embryophyta</taxon>
        <taxon>Tracheophyta</taxon>
        <taxon>Spermatophyta</taxon>
        <taxon>Magnoliopsida</taxon>
        <taxon>eudicotyledons</taxon>
        <taxon>Gunneridae</taxon>
        <taxon>Pentapetalae</taxon>
        <taxon>rosids</taxon>
        <taxon>malvids</taxon>
        <taxon>Brassicales</taxon>
        <taxon>Brassicaceae</taxon>
        <taxon>Camelineae</taxon>
        <taxon>Arabidopsis</taxon>
    </lineage>
</organism>
<proteinExistence type="evidence at transcript level"/>
<evidence type="ECO:0000255" key="1"/>
<evidence type="ECO:0000269" key="2">
    <source>
    </source>
</evidence>
<evidence type="ECO:0000305" key="3"/>